<proteinExistence type="inferred from homology"/>
<accession>Q8XZU1</accession>
<name>LEXA_RALN1</name>
<protein>
    <recommendedName>
        <fullName evidence="1">LexA repressor</fullName>
        <ecNumber evidence="1">3.4.21.88</ecNumber>
    </recommendedName>
</protein>
<feature type="chain" id="PRO_0000170074" description="LexA repressor">
    <location>
        <begin position="1"/>
        <end position="216"/>
    </location>
</feature>
<feature type="DNA-binding region" description="H-T-H motif" evidence="1">
    <location>
        <begin position="28"/>
        <end position="48"/>
    </location>
</feature>
<feature type="active site" description="For autocatalytic cleavage activity" evidence="1">
    <location>
        <position position="134"/>
    </location>
</feature>
<feature type="active site" description="For autocatalytic cleavage activity" evidence="1">
    <location>
        <position position="171"/>
    </location>
</feature>
<feature type="site" description="Cleavage; by autolysis" evidence="1">
    <location>
        <begin position="99"/>
        <end position="100"/>
    </location>
</feature>
<organism>
    <name type="scientific">Ralstonia nicotianae (strain ATCC BAA-1114 / GMI1000)</name>
    <name type="common">Ralstonia solanacearum</name>
    <dbReference type="NCBI Taxonomy" id="267608"/>
    <lineage>
        <taxon>Bacteria</taxon>
        <taxon>Pseudomonadati</taxon>
        <taxon>Pseudomonadota</taxon>
        <taxon>Betaproteobacteria</taxon>
        <taxon>Burkholderiales</taxon>
        <taxon>Burkholderiaceae</taxon>
        <taxon>Ralstonia</taxon>
        <taxon>Ralstonia solanacearum species complex</taxon>
    </lineage>
</organism>
<gene>
    <name evidence="1" type="primary">lexA</name>
    <name type="ordered locus">RSc1304</name>
    <name type="ORF">RS02826</name>
</gene>
<comment type="function">
    <text evidence="1">Represses a number of genes involved in the response to DNA damage (SOS response), including recA and lexA. In the presence of single-stranded DNA, RecA interacts with LexA causing an autocatalytic cleavage which disrupts the DNA-binding part of LexA, leading to derepression of the SOS regulon and eventually DNA repair.</text>
</comment>
<comment type="catalytic activity">
    <reaction evidence="1">
        <text>Hydrolysis of Ala-|-Gly bond in repressor LexA.</text>
        <dbReference type="EC" id="3.4.21.88"/>
    </reaction>
</comment>
<comment type="subunit">
    <text evidence="1">Homodimer.</text>
</comment>
<comment type="similarity">
    <text evidence="1">Belongs to the peptidase S24 family.</text>
</comment>
<evidence type="ECO:0000255" key="1">
    <source>
        <dbReference type="HAMAP-Rule" id="MF_00015"/>
    </source>
</evidence>
<sequence length="216" mass="23536">MATLTTRQQQIYDLIHQTIQRTGFPPTRAEIAAEFGFSSPNAAEEHLRALARKGVIELTPGASRGIRLRAEGGASPHQFSLPSMGLMQLTLPLVGRVAAGSPILAAEHIDRQYQVDPSLFSSRPDFLLKVRGMSMRDAGILDGDLLAVQRAAEAANGKIVVARLGDDVTVKRFQRKGRQVELIAENPDFEPIHVDLDRDEFQLEGLAVGLIRPAAP</sequence>
<reference key="1">
    <citation type="journal article" date="2002" name="Nature">
        <title>Genome sequence of the plant pathogen Ralstonia solanacearum.</title>
        <authorList>
            <person name="Salanoubat M."/>
            <person name="Genin S."/>
            <person name="Artiguenave F."/>
            <person name="Gouzy J."/>
            <person name="Mangenot S."/>
            <person name="Arlat M."/>
            <person name="Billault A."/>
            <person name="Brottier P."/>
            <person name="Camus J.-C."/>
            <person name="Cattolico L."/>
            <person name="Chandler M."/>
            <person name="Choisne N."/>
            <person name="Claudel-Renard C."/>
            <person name="Cunnac S."/>
            <person name="Demange N."/>
            <person name="Gaspin C."/>
            <person name="Lavie M."/>
            <person name="Moisan A."/>
            <person name="Robert C."/>
            <person name="Saurin W."/>
            <person name="Schiex T."/>
            <person name="Siguier P."/>
            <person name="Thebault P."/>
            <person name="Whalen M."/>
            <person name="Wincker P."/>
            <person name="Levy M."/>
            <person name="Weissenbach J."/>
            <person name="Boucher C.A."/>
        </authorList>
    </citation>
    <scope>NUCLEOTIDE SEQUENCE [LARGE SCALE GENOMIC DNA]</scope>
    <source>
        <strain>ATCC BAA-1114 / GMI1000</strain>
    </source>
</reference>
<keyword id="KW-0068">Autocatalytic cleavage</keyword>
<keyword id="KW-0227">DNA damage</keyword>
<keyword id="KW-0234">DNA repair</keyword>
<keyword id="KW-0235">DNA replication</keyword>
<keyword id="KW-0238">DNA-binding</keyword>
<keyword id="KW-0378">Hydrolase</keyword>
<keyword id="KW-1185">Reference proteome</keyword>
<keyword id="KW-0678">Repressor</keyword>
<keyword id="KW-0742">SOS response</keyword>
<keyword id="KW-0804">Transcription</keyword>
<keyword id="KW-0805">Transcription regulation</keyword>
<dbReference type="EC" id="3.4.21.88" evidence="1"/>
<dbReference type="EMBL" id="AL646052">
    <property type="protein sequence ID" value="CAD15006.1"/>
    <property type="molecule type" value="Genomic_DNA"/>
</dbReference>
<dbReference type="RefSeq" id="WP_011001253.1">
    <property type="nucleotide sequence ID" value="NC_003295.1"/>
</dbReference>
<dbReference type="SMR" id="Q8XZU1"/>
<dbReference type="STRING" id="267608.RSc1304"/>
<dbReference type="MEROPS" id="S24.001"/>
<dbReference type="EnsemblBacteria" id="CAD15006">
    <property type="protein sequence ID" value="CAD15006"/>
    <property type="gene ID" value="RSc1304"/>
</dbReference>
<dbReference type="KEGG" id="rso:RSc1304"/>
<dbReference type="eggNOG" id="COG1974">
    <property type="taxonomic scope" value="Bacteria"/>
</dbReference>
<dbReference type="HOGENOM" id="CLU_066192_45_3_4"/>
<dbReference type="Proteomes" id="UP000001436">
    <property type="component" value="Chromosome"/>
</dbReference>
<dbReference type="GO" id="GO:0003677">
    <property type="term" value="F:DNA binding"/>
    <property type="evidence" value="ECO:0007669"/>
    <property type="project" value="UniProtKB-UniRule"/>
</dbReference>
<dbReference type="GO" id="GO:0004252">
    <property type="term" value="F:serine-type endopeptidase activity"/>
    <property type="evidence" value="ECO:0007669"/>
    <property type="project" value="UniProtKB-UniRule"/>
</dbReference>
<dbReference type="GO" id="GO:0006281">
    <property type="term" value="P:DNA repair"/>
    <property type="evidence" value="ECO:0007669"/>
    <property type="project" value="UniProtKB-UniRule"/>
</dbReference>
<dbReference type="GO" id="GO:0006260">
    <property type="term" value="P:DNA replication"/>
    <property type="evidence" value="ECO:0007669"/>
    <property type="project" value="UniProtKB-UniRule"/>
</dbReference>
<dbReference type="GO" id="GO:0045892">
    <property type="term" value="P:negative regulation of DNA-templated transcription"/>
    <property type="evidence" value="ECO:0007669"/>
    <property type="project" value="UniProtKB-UniRule"/>
</dbReference>
<dbReference type="GO" id="GO:0006508">
    <property type="term" value="P:proteolysis"/>
    <property type="evidence" value="ECO:0007669"/>
    <property type="project" value="InterPro"/>
</dbReference>
<dbReference type="GO" id="GO:0009432">
    <property type="term" value="P:SOS response"/>
    <property type="evidence" value="ECO:0007669"/>
    <property type="project" value="UniProtKB-UniRule"/>
</dbReference>
<dbReference type="CDD" id="cd06529">
    <property type="entry name" value="S24_LexA-like"/>
    <property type="match status" value="1"/>
</dbReference>
<dbReference type="FunFam" id="1.10.10.10:FF:000009">
    <property type="entry name" value="LexA repressor"/>
    <property type="match status" value="1"/>
</dbReference>
<dbReference type="FunFam" id="2.10.109.10:FF:000001">
    <property type="entry name" value="LexA repressor"/>
    <property type="match status" value="1"/>
</dbReference>
<dbReference type="Gene3D" id="2.10.109.10">
    <property type="entry name" value="Umud Fragment, subunit A"/>
    <property type="match status" value="1"/>
</dbReference>
<dbReference type="Gene3D" id="1.10.10.10">
    <property type="entry name" value="Winged helix-like DNA-binding domain superfamily/Winged helix DNA-binding domain"/>
    <property type="match status" value="1"/>
</dbReference>
<dbReference type="HAMAP" id="MF_00015">
    <property type="entry name" value="LexA"/>
    <property type="match status" value="1"/>
</dbReference>
<dbReference type="InterPro" id="IPR006200">
    <property type="entry name" value="LexA"/>
</dbReference>
<dbReference type="InterPro" id="IPR039418">
    <property type="entry name" value="LexA-like"/>
</dbReference>
<dbReference type="InterPro" id="IPR036286">
    <property type="entry name" value="LexA/Signal_pep-like_sf"/>
</dbReference>
<dbReference type="InterPro" id="IPR006199">
    <property type="entry name" value="LexA_DNA-bd_dom"/>
</dbReference>
<dbReference type="InterPro" id="IPR050077">
    <property type="entry name" value="LexA_repressor"/>
</dbReference>
<dbReference type="InterPro" id="IPR006197">
    <property type="entry name" value="Peptidase_S24_LexA"/>
</dbReference>
<dbReference type="InterPro" id="IPR015927">
    <property type="entry name" value="Peptidase_S24_S26A/B/C"/>
</dbReference>
<dbReference type="InterPro" id="IPR036388">
    <property type="entry name" value="WH-like_DNA-bd_sf"/>
</dbReference>
<dbReference type="InterPro" id="IPR036390">
    <property type="entry name" value="WH_DNA-bd_sf"/>
</dbReference>
<dbReference type="NCBIfam" id="TIGR00498">
    <property type="entry name" value="lexA"/>
    <property type="match status" value="1"/>
</dbReference>
<dbReference type="PANTHER" id="PTHR33516">
    <property type="entry name" value="LEXA REPRESSOR"/>
    <property type="match status" value="1"/>
</dbReference>
<dbReference type="PANTHER" id="PTHR33516:SF2">
    <property type="entry name" value="LEXA REPRESSOR-RELATED"/>
    <property type="match status" value="1"/>
</dbReference>
<dbReference type="Pfam" id="PF01726">
    <property type="entry name" value="LexA_DNA_bind"/>
    <property type="match status" value="1"/>
</dbReference>
<dbReference type="Pfam" id="PF00717">
    <property type="entry name" value="Peptidase_S24"/>
    <property type="match status" value="1"/>
</dbReference>
<dbReference type="PRINTS" id="PR00726">
    <property type="entry name" value="LEXASERPTASE"/>
</dbReference>
<dbReference type="SUPFAM" id="SSF51306">
    <property type="entry name" value="LexA/Signal peptidase"/>
    <property type="match status" value="1"/>
</dbReference>
<dbReference type="SUPFAM" id="SSF46785">
    <property type="entry name" value="Winged helix' DNA-binding domain"/>
    <property type="match status" value="1"/>
</dbReference>